<accession>O84537</accession>
<feature type="chain" id="PRO_0000091664" description="3-hydroxyacyl-[acyl-carrier-protein] dehydratase FabZ">
    <location>
        <begin position="1"/>
        <end position="153"/>
    </location>
</feature>
<feature type="active site" evidence="1">
    <location>
        <position position="54"/>
    </location>
</feature>
<comment type="function">
    <text evidence="1">Involved in unsaturated fatty acids biosynthesis. Catalyzes the dehydration of short chain beta-hydroxyacyl-ACPs and long chain saturated and unsaturated beta-hydroxyacyl-ACPs.</text>
</comment>
<comment type="catalytic activity">
    <reaction evidence="1">
        <text>a (3R)-hydroxyacyl-[ACP] = a (2E)-enoyl-[ACP] + H2O</text>
        <dbReference type="Rhea" id="RHEA:13097"/>
        <dbReference type="Rhea" id="RHEA-COMP:9925"/>
        <dbReference type="Rhea" id="RHEA-COMP:9945"/>
        <dbReference type="ChEBI" id="CHEBI:15377"/>
        <dbReference type="ChEBI" id="CHEBI:78784"/>
        <dbReference type="ChEBI" id="CHEBI:78827"/>
        <dbReference type="EC" id="4.2.1.59"/>
    </reaction>
</comment>
<comment type="subcellular location">
    <subcellularLocation>
        <location evidence="1">Cytoplasm</location>
    </subcellularLocation>
</comment>
<comment type="similarity">
    <text evidence="1">Belongs to the thioester dehydratase family. FabZ subfamily.</text>
</comment>
<gene>
    <name evidence="1" type="primary">fabZ</name>
    <name type="ordered locus">CT_532</name>
</gene>
<name>FABZ_CHLTR</name>
<evidence type="ECO:0000255" key="1">
    <source>
        <dbReference type="HAMAP-Rule" id="MF_00406"/>
    </source>
</evidence>
<reference key="1">
    <citation type="journal article" date="1998" name="Science">
        <title>Genome sequence of an obligate intracellular pathogen of humans: Chlamydia trachomatis.</title>
        <authorList>
            <person name="Stephens R.S."/>
            <person name="Kalman S."/>
            <person name="Lammel C.J."/>
            <person name="Fan J."/>
            <person name="Marathe R."/>
            <person name="Aravind L."/>
            <person name="Mitchell W.P."/>
            <person name="Olinger L."/>
            <person name="Tatusov R.L."/>
            <person name="Zhao Q."/>
            <person name="Koonin E.V."/>
            <person name="Davis R.W."/>
        </authorList>
    </citation>
    <scope>NUCLEOTIDE SEQUENCE [LARGE SCALE GENOMIC DNA]</scope>
    <source>
        <strain>ATCC VR-885 / DSM 19411 / UW-3/Cx</strain>
    </source>
</reference>
<sequence>MNEKPVLGIQDIQNLLPHRYPFLLVDKILSYDLNTRSVVAQKNVTINEPFFAGHFPGAPIMPGVLILEALAQAAGVLLGIILENDRDKKIALFLGIQKAKFRQPVKPGDVLTLKAEFSLISAKGGKAFAQAFVGSQVVAEGELSFVLVKKESI</sequence>
<keyword id="KW-0963">Cytoplasm</keyword>
<keyword id="KW-0441">Lipid A biosynthesis</keyword>
<keyword id="KW-0444">Lipid biosynthesis</keyword>
<keyword id="KW-0443">Lipid metabolism</keyword>
<keyword id="KW-0456">Lyase</keyword>
<keyword id="KW-1185">Reference proteome</keyword>
<proteinExistence type="inferred from homology"/>
<protein>
    <recommendedName>
        <fullName evidence="1">3-hydroxyacyl-[acyl-carrier-protein] dehydratase FabZ</fullName>
        <ecNumber evidence="1">4.2.1.59</ecNumber>
    </recommendedName>
    <alternativeName>
        <fullName evidence="1">(3R)-hydroxymyristoyl-[acyl-carrier-protein] dehydratase</fullName>
        <shortName evidence="1">(3R)-hydroxymyristoyl-ACP dehydrase</shortName>
    </alternativeName>
    <alternativeName>
        <fullName evidence="1">Beta-hydroxyacyl-ACP dehydratase</fullName>
    </alternativeName>
</protein>
<dbReference type="EC" id="4.2.1.59" evidence="1"/>
<dbReference type="EMBL" id="AE001273">
    <property type="protein sequence ID" value="AAC68134.1"/>
    <property type="molecule type" value="Genomic_DNA"/>
</dbReference>
<dbReference type="PIR" id="C71502">
    <property type="entry name" value="C71502"/>
</dbReference>
<dbReference type="RefSeq" id="NP_220047.1">
    <property type="nucleotide sequence ID" value="NC_000117.1"/>
</dbReference>
<dbReference type="RefSeq" id="WP_009871896.1">
    <property type="nucleotide sequence ID" value="NC_000117.1"/>
</dbReference>
<dbReference type="SMR" id="O84537"/>
<dbReference type="FunCoup" id="O84537">
    <property type="interactions" value="231"/>
</dbReference>
<dbReference type="STRING" id="272561.CT_532"/>
<dbReference type="EnsemblBacteria" id="AAC68134">
    <property type="protein sequence ID" value="AAC68134"/>
    <property type="gene ID" value="CT_532"/>
</dbReference>
<dbReference type="GeneID" id="884308"/>
<dbReference type="KEGG" id="ctr:CT_532"/>
<dbReference type="PATRIC" id="fig|272561.5.peg.577"/>
<dbReference type="HOGENOM" id="CLU_078912_3_3_0"/>
<dbReference type="InParanoid" id="O84537"/>
<dbReference type="OrthoDB" id="9772788at2"/>
<dbReference type="Proteomes" id="UP000000431">
    <property type="component" value="Chromosome"/>
</dbReference>
<dbReference type="GO" id="GO:0005737">
    <property type="term" value="C:cytoplasm"/>
    <property type="evidence" value="ECO:0007669"/>
    <property type="project" value="UniProtKB-SubCell"/>
</dbReference>
<dbReference type="GO" id="GO:0016020">
    <property type="term" value="C:membrane"/>
    <property type="evidence" value="ECO:0007669"/>
    <property type="project" value="GOC"/>
</dbReference>
<dbReference type="GO" id="GO:0019171">
    <property type="term" value="F:(3R)-hydroxyacyl-[acyl-carrier-protein] dehydratase activity"/>
    <property type="evidence" value="ECO:0007669"/>
    <property type="project" value="UniProtKB-EC"/>
</dbReference>
<dbReference type="GO" id="GO:0006633">
    <property type="term" value="P:fatty acid biosynthetic process"/>
    <property type="evidence" value="ECO:0007669"/>
    <property type="project" value="UniProtKB-UniRule"/>
</dbReference>
<dbReference type="GO" id="GO:0009245">
    <property type="term" value="P:lipid A biosynthetic process"/>
    <property type="evidence" value="ECO:0007669"/>
    <property type="project" value="UniProtKB-UniRule"/>
</dbReference>
<dbReference type="CDD" id="cd01288">
    <property type="entry name" value="FabZ"/>
    <property type="match status" value="1"/>
</dbReference>
<dbReference type="FunFam" id="3.10.129.10:FF:000001">
    <property type="entry name" value="3-hydroxyacyl-[acyl-carrier-protein] dehydratase FabZ"/>
    <property type="match status" value="1"/>
</dbReference>
<dbReference type="Gene3D" id="3.10.129.10">
    <property type="entry name" value="Hotdog Thioesterase"/>
    <property type="match status" value="1"/>
</dbReference>
<dbReference type="HAMAP" id="MF_00406">
    <property type="entry name" value="FabZ"/>
    <property type="match status" value="1"/>
</dbReference>
<dbReference type="InterPro" id="IPR013114">
    <property type="entry name" value="FabA_FabZ"/>
</dbReference>
<dbReference type="InterPro" id="IPR010084">
    <property type="entry name" value="FabZ"/>
</dbReference>
<dbReference type="InterPro" id="IPR029069">
    <property type="entry name" value="HotDog_dom_sf"/>
</dbReference>
<dbReference type="NCBIfam" id="TIGR01750">
    <property type="entry name" value="fabZ"/>
    <property type="match status" value="1"/>
</dbReference>
<dbReference type="NCBIfam" id="NF000582">
    <property type="entry name" value="PRK00006.1"/>
    <property type="match status" value="1"/>
</dbReference>
<dbReference type="PANTHER" id="PTHR30272">
    <property type="entry name" value="3-HYDROXYACYL-[ACYL-CARRIER-PROTEIN] DEHYDRATASE"/>
    <property type="match status" value="1"/>
</dbReference>
<dbReference type="PANTHER" id="PTHR30272:SF1">
    <property type="entry name" value="3-HYDROXYACYL-[ACYL-CARRIER-PROTEIN] DEHYDRATASE"/>
    <property type="match status" value="1"/>
</dbReference>
<dbReference type="Pfam" id="PF07977">
    <property type="entry name" value="FabA"/>
    <property type="match status" value="1"/>
</dbReference>
<dbReference type="SUPFAM" id="SSF54637">
    <property type="entry name" value="Thioesterase/thiol ester dehydrase-isomerase"/>
    <property type="match status" value="1"/>
</dbReference>
<organism>
    <name type="scientific">Chlamydia trachomatis serovar D (strain ATCC VR-885 / DSM 19411 / UW-3/Cx)</name>
    <dbReference type="NCBI Taxonomy" id="272561"/>
    <lineage>
        <taxon>Bacteria</taxon>
        <taxon>Pseudomonadati</taxon>
        <taxon>Chlamydiota</taxon>
        <taxon>Chlamydiia</taxon>
        <taxon>Chlamydiales</taxon>
        <taxon>Chlamydiaceae</taxon>
        <taxon>Chlamydia/Chlamydophila group</taxon>
        <taxon>Chlamydia</taxon>
    </lineage>
</organism>